<sequence length="251" mass="26972">MKILVSNDDGVLAPGIKILANELSTLGEVKVVAPDRNRSGASNSLTLTQPLRVKQLDNGYYSVDGTPTDCVHLALTGFLEPTDIVVSGINEGANLGDDVLYSGTVAAAMEGRYLGLPAIAISMVGDNIQHYETAAIIAKQLVIKLSANKLPSQTILNVNVPDLPLNQIRGLQVTRLGTRHSAEPIIKEYDPRGRPIYWVGPPGIEADAGAGTDFFAIKTGHVSITPLHLDMTHYKLFDHLSNLLNEICIEN</sequence>
<name>SURE_LEGPH</name>
<organism>
    <name type="scientific">Legionella pneumophila subsp. pneumophila (strain Philadelphia 1 / ATCC 33152 / DSM 7513)</name>
    <dbReference type="NCBI Taxonomy" id="272624"/>
    <lineage>
        <taxon>Bacteria</taxon>
        <taxon>Pseudomonadati</taxon>
        <taxon>Pseudomonadota</taxon>
        <taxon>Gammaproteobacteria</taxon>
        <taxon>Legionellales</taxon>
        <taxon>Legionellaceae</taxon>
        <taxon>Legionella</taxon>
    </lineage>
</organism>
<protein>
    <recommendedName>
        <fullName evidence="1">5'-nucleotidase SurE</fullName>
        <ecNumber evidence="1">3.1.3.5</ecNumber>
    </recommendedName>
    <alternativeName>
        <fullName evidence="1">Nucleoside 5'-monophosphate phosphohydrolase</fullName>
    </alternativeName>
</protein>
<evidence type="ECO:0000255" key="1">
    <source>
        <dbReference type="HAMAP-Rule" id="MF_00060"/>
    </source>
</evidence>
<feature type="chain" id="PRO_0000111819" description="5'-nucleotidase SurE">
    <location>
        <begin position="1"/>
        <end position="251"/>
    </location>
</feature>
<feature type="binding site" evidence="1">
    <location>
        <position position="8"/>
    </location>
    <ligand>
        <name>a divalent metal cation</name>
        <dbReference type="ChEBI" id="CHEBI:60240"/>
    </ligand>
</feature>
<feature type="binding site" evidence="1">
    <location>
        <position position="9"/>
    </location>
    <ligand>
        <name>a divalent metal cation</name>
        <dbReference type="ChEBI" id="CHEBI:60240"/>
    </ligand>
</feature>
<feature type="binding site" evidence="1">
    <location>
        <position position="39"/>
    </location>
    <ligand>
        <name>a divalent metal cation</name>
        <dbReference type="ChEBI" id="CHEBI:60240"/>
    </ligand>
</feature>
<feature type="binding site" evidence="1">
    <location>
        <position position="90"/>
    </location>
    <ligand>
        <name>a divalent metal cation</name>
        <dbReference type="ChEBI" id="CHEBI:60240"/>
    </ligand>
</feature>
<gene>
    <name evidence="1" type="primary">surE</name>
    <name type="ordered locus">lpg1282</name>
</gene>
<comment type="function">
    <text evidence="1">Nucleotidase that shows phosphatase activity on nucleoside 5'-monophosphates.</text>
</comment>
<comment type="catalytic activity">
    <reaction evidence="1">
        <text>a ribonucleoside 5'-phosphate + H2O = a ribonucleoside + phosphate</text>
        <dbReference type="Rhea" id="RHEA:12484"/>
        <dbReference type="ChEBI" id="CHEBI:15377"/>
        <dbReference type="ChEBI" id="CHEBI:18254"/>
        <dbReference type="ChEBI" id="CHEBI:43474"/>
        <dbReference type="ChEBI" id="CHEBI:58043"/>
        <dbReference type="EC" id="3.1.3.5"/>
    </reaction>
</comment>
<comment type="cofactor">
    <cofactor evidence="1">
        <name>a divalent metal cation</name>
        <dbReference type="ChEBI" id="CHEBI:60240"/>
    </cofactor>
    <text evidence="1">Binds 1 divalent metal cation per subunit.</text>
</comment>
<comment type="subcellular location">
    <subcellularLocation>
        <location evidence="1">Cytoplasm</location>
    </subcellularLocation>
</comment>
<comment type="similarity">
    <text evidence="1">Belongs to the SurE nucleotidase family.</text>
</comment>
<reference key="1">
    <citation type="journal article" date="1999" name="J. Bacteriol.">
        <title>The Legionella pneumophila rpoS gene is required for growth within Acanthamoeba castellanii.</title>
        <authorList>
            <person name="Hales L.M."/>
            <person name="Shuman H.A."/>
        </authorList>
    </citation>
    <scope>NUCLEOTIDE SEQUENCE [GENOMIC DNA]</scope>
</reference>
<reference key="2">
    <citation type="journal article" date="2004" name="Science">
        <title>The genomic sequence of the accidental pathogen Legionella pneumophila.</title>
        <authorList>
            <person name="Chien M."/>
            <person name="Morozova I."/>
            <person name="Shi S."/>
            <person name="Sheng H."/>
            <person name="Chen J."/>
            <person name="Gomez S.M."/>
            <person name="Asamani G."/>
            <person name="Hill K."/>
            <person name="Nuara J."/>
            <person name="Feder M."/>
            <person name="Rineer J."/>
            <person name="Greenberg J.J."/>
            <person name="Steshenko V."/>
            <person name="Park S.H."/>
            <person name="Zhao B."/>
            <person name="Teplitskaya E."/>
            <person name="Edwards J.R."/>
            <person name="Pampou S."/>
            <person name="Georghiou A."/>
            <person name="Chou I.-C."/>
            <person name="Iannuccilli W."/>
            <person name="Ulz M.E."/>
            <person name="Kim D.H."/>
            <person name="Geringer-Sameth A."/>
            <person name="Goldsberry C."/>
            <person name="Morozov P."/>
            <person name="Fischer S.G."/>
            <person name="Segal G."/>
            <person name="Qu X."/>
            <person name="Rzhetsky A."/>
            <person name="Zhang P."/>
            <person name="Cayanis E."/>
            <person name="De Jong P.J."/>
            <person name="Ju J."/>
            <person name="Kalachikov S."/>
            <person name="Shuman H.A."/>
            <person name="Russo J.J."/>
        </authorList>
    </citation>
    <scope>NUCLEOTIDE SEQUENCE [LARGE SCALE GENOMIC DNA]</scope>
    <source>
        <strain>Philadelphia 1 / ATCC 33152 / DSM 7513</strain>
    </source>
</reference>
<dbReference type="EC" id="3.1.3.5" evidence="1"/>
<dbReference type="EMBL" id="AF117715">
    <property type="protein sequence ID" value="AAD51394.1"/>
    <property type="molecule type" value="Genomic_DNA"/>
</dbReference>
<dbReference type="EMBL" id="AE017354">
    <property type="protein sequence ID" value="AAU27365.1"/>
    <property type="molecule type" value="Genomic_DNA"/>
</dbReference>
<dbReference type="RefSeq" id="WP_010947013.1">
    <property type="nucleotide sequence ID" value="NC_002942.5"/>
</dbReference>
<dbReference type="RefSeq" id="YP_095312.1">
    <property type="nucleotide sequence ID" value="NC_002942.5"/>
</dbReference>
<dbReference type="SMR" id="Q9S4T3"/>
<dbReference type="STRING" id="272624.lpg1282"/>
<dbReference type="PaxDb" id="272624-lpg1282"/>
<dbReference type="GeneID" id="57035274"/>
<dbReference type="KEGG" id="lpn:lpg1282"/>
<dbReference type="PATRIC" id="fig|272624.6.peg.1350"/>
<dbReference type="eggNOG" id="COG0496">
    <property type="taxonomic scope" value="Bacteria"/>
</dbReference>
<dbReference type="HOGENOM" id="CLU_045192_1_2_6"/>
<dbReference type="OrthoDB" id="9780815at2"/>
<dbReference type="Proteomes" id="UP000000609">
    <property type="component" value="Chromosome"/>
</dbReference>
<dbReference type="GO" id="GO:0005737">
    <property type="term" value="C:cytoplasm"/>
    <property type="evidence" value="ECO:0007669"/>
    <property type="project" value="UniProtKB-SubCell"/>
</dbReference>
<dbReference type="GO" id="GO:0008254">
    <property type="term" value="F:3'-nucleotidase activity"/>
    <property type="evidence" value="ECO:0007669"/>
    <property type="project" value="TreeGrafter"/>
</dbReference>
<dbReference type="GO" id="GO:0008253">
    <property type="term" value="F:5'-nucleotidase activity"/>
    <property type="evidence" value="ECO:0007669"/>
    <property type="project" value="UniProtKB-UniRule"/>
</dbReference>
<dbReference type="GO" id="GO:0004309">
    <property type="term" value="F:exopolyphosphatase activity"/>
    <property type="evidence" value="ECO:0007669"/>
    <property type="project" value="TreeGrafter"/>
</dbReference>
<dbReference type="GO" id="GO:0046872">
    <property type="term" value="F:metal ion binding"/>
    <property type="evidence" value="ECO:0007669"/>
    <property type="project" value="UniProtKB-UniRule"/>
</dbReference>
<dbReference type="GO" id="GO:0000166">
    <property type="term" value="F:nucleotide binding"/>
    <property type="evidence" value="ECO:0007669"/>
    <property type="project" value="UniProtKB-KW"/>
</dbReference>
<dbReference type="FunFam" id="3.40.1210.10:FF:000001">
    <property type="entry name" value="5'/3'-nucleotidase SurE"/>
    <property type="match status" value="1"/>
</dbReference>
<dbReference type="Gene3D" id="3.40.1210.10">
    <property type="entry name" value="Survival protein SurE-like phosphatase/nucleotidase"/>
    <property type="match status" value="1"/>
</dbReference>
<dbReference type="HAMAP" id="MF_00060">
    <property type="entry name" value="SurE"/>
    <property type="match status" value="1"/>
</dbReference>
<dbReference type="InterPro" id="IPR030048">
    <property type="entry name" value="SurE"/>
</dbReference>
<dbReference type="InterPro" id="IPR002828">
    <property type="entry name" value="SurE-like_Pase/nucleotidase"/>
</dbReference>
<dbReference type="InterPro" id="IPR036523">
    <property type="entry name" value="SurE-like_sf"/>
</dbReference>
<dbReference type="NCBIfam" id="NF001489">
    <property type="entry name" value="PRK00346.1-3"/>
    <property type="match status" value="1"/>
</dbReference>
<dbReference type="NCBIfam" id="NF001490">
    <property type="entry name" value="PRK00346.1-4"/>
    <property type="match status" value="1"/>
</dbReference>
<dbReference type="NCBIfam" id="TIGR00087">
    <property type="entry name" value="surE"/>
    <property type="match status" value="1"/>
</dbReference>
<dbReference type="PANTHER" id="PTHR30457">
    <property type="entry name" value="5'-NUCLEOTIDASE SURE"/>
    <property type="match status" value="1"/>
</dbReference>
<dbReference type="PANTHER" id="PTHR30457:SF12">
    <property type="entry name" value="5'_3'-NUCLEOTIDASE SURE"/>
    <property type="match status" value="1"/>
</dbReference>
<dbReference type="Pfam" id="PF01975">
    <property type="entry name" value="SurE"/>
    <property type="match status" value="1"/>
</dbReference>
<dbReference type="SUPFAM" id="SSF64167">
    <property type="entry name" value="SurE-like"/>
    <property type="match status" value="1"/>
</dbReference>
<proteinExistence type="inferred from homology"/>
<accession>Q9S4T3</accession>
<accession>Q5ZW06</accession>
<keyword id="KW-0963">Cytoplasm</keyword>
<keyword id="KW-0378">Hydrolase</keyword>
<keyword id="KW-0479">Metal-binding</keyword>
<keyword id="KW-0547">Nucleotide-binding</keyword>
<keyword id="KW-1185">Reference proteome</keyword>